<sequence>MAQKKGGGSTRNGRDSKPKMLGVKAFGGELISAGSIIVRQRGTQFHPGVNVGVGKDHTLFALVDGHVSFGVKGALNKHMVNVTPA</sequence>
<protein>
    <recommendedName>
        <fullName evidence="1">Large ribosomal subunit protein bL27</fullName>
    </recommendedName>
    <alternativeName>
        <fullName evidence="2">50S ribosomal protein L27</fullName>
    </alternativeName>
</protein>
<name>RL27_VARPS</name>
<comment type="similarity">
    <text evidence="1">Belongs to the bacterial ribosomal protein bL27 family.</text>
</comment>
<accession>C5CXX4</accession>
<feature type="chain" id="PRO_1000211944" description="Large ribosomal subunit protein bL27">
    <location>
        <begin position="1"/>
        <end position="85"/>
    </location>
</feature>
<keyword id="KW-0687">Ribonucleoprotein</keyword>
<keyword id="KW-0689">Ribosomal protein</keyword>
<organism>
    <name type="scientific">Variovorax paradoxus (strain S110)</name>
    <dbReference type="NCBI Taxonomy" id="543728"/>
    <lineage>
        <taxon>Bacteria</taxon>
        <taxon>Pseudomonadati</taxon>
        <taxon>Pseudomonadota</taxon>
        <taxon>Betaproteobacteria</taxon>
        <taxon>Burkholderiales</taxon>
        <taxon>Comamonadaceae</taxon>
        <taxon>Variovorax</taxon>
    </lineage>
</organism>
<reference key="1">
    <citation type="journal article" date="2011" name="J. Bacteriol.">
        <title>Complete genome sequence of the metabolically versatile plant growth-promoting endophyte, Variovorax paradoxus S110.</title>
        <authorList>
            <person name="Han J.I."/>
            <person name="Choi H.K."/>
            <person name="Lee S.W."/>
            <person name="Orwin P.M."/>
            <person name="Kim J."/>
            <person name="Laroe S.L."/>
            <person name="Kim T.G."/>
            <person name="O'Neil J."/>
            <person name="Leadbetter J.R."/>
            <person name="Lee S.Y."/>
            <person name="Hur C.G."/>
            <person name="Spain J.C."/>
            <person name="Ovchinnikova G."/>
            <person name="Goodwin L."/>
            <person name="Han C."/>
        </authorList>
    </citation>
    <scope>NUCLEOTIDE SEQUENCE [LARGE SCALE GENOMIC DNA]</scope>
    <source>
        <strain>S110</strain>
    </source>
</reference>
<dbReference type="EMBL" id="CP001635">
    <property type="protein sequence ID" value="ACS20830.1"/>
    <property type="molecule type" value="Genomic_DNA"/>
</dbReference>
<dbReference type="SMR" id="C5CXX4"/>
<dbReference type="STRING" id="543728.Vapar_4217"/>
<dbReference type="KEGG" id="vap:Vapar_4217"/>
<dbReference type="eggNOG" id="COG0211">
    <property type="taxonomic scope" value="Bacteria"/>
</dbReference>
<dbReference type="HOGENOM" id="CLU_095424_4_1_4"/>
<dbReference type="OrthoDB" id="9803474at2"/>
<dbReference type="GO" id="GO:0022625">
    <property type="term" value="C:cytosolic large ribosomal subunit"/>
    <property type="evidence" value="ECO:0007669"/>
    <property type="project" value="TreeGrafter"/>
</dbReference>
<dbReference type="GO" id="GO:0003735">
    <property type="term" value="F:structural constituent of ribosome"/>
    <property type="evidence" value="ECO:0007669"/>
    <property type="project" value="InterPro"/>
</dbReference>
<dbReference type="GO" id="GO:0006412">
    <property type="term" value="P:translation"/>
    <property type="evidence" value="ECO:0007669"/>
    <property type="project" value="UniProtKB-UniRule"/>
</dbReference>
<dbReference type="FunFam" id="2.40.50.100:FF:000020">
    <property type="entry name" value="50S ribosomal protein L27"/>
    <property type="match status" value="1"/>
</dbReference>
<dbReference type="Gene3D" id="2.40.50.100">
    <property type="match status" value="1"/>
</dbReference>
<dbReference type="HAMAP" id="MF_00539">
    <property type="entry name" value="Ribosomal_bL27"/>
    <property type="match status" value="1"/>
</dbReference>
<dbReference type="InterPro" id="IPR001684">
    <property type="entry name" value="Ribosomal_bL27"/>
</dbReference>
<dbReference type="InterPro" id="IPR018261">
    <property type="entry name" value="Ribosomal_bL27_CS"/>
</dbReference>
<dbReference type="NCBIfam" id="TIGR00062">
    <property type="entry name" value="L27"/>
    <property type="match status" value="1"/>
</dbReference>
<dbReference type="PANTHER" id="PTHR15893:SF0">
    <property type="entry name" value="LARGE RIBOSOMAL SUBUNIT PROTEIN BL27M"/>
    <property type="match status" value="1"/>
</dbReference>
<dbReference type="PANTHER" id="PTHR15893">
    <property type="entry name" value="RIBOSOMAL PROTEIN L27"/>
    <property type="match status" value="1"/>
</dbReference>
<dbReference type="Pfam" id="PF01016">
    <property type="entry name" value="Ribosomal_L27"/>
    <property type="match status" value="1"/>
</dbReference>
<dbReference type="PRINTS" id="PR00063">
    <property type="entry name" value="RIBOSOMALL27"/>
</dbReference>
<dbReference type="SUPFAM" id="SSF110324">
    <property type="entry name" value="Ribosomal L27 protein-like"/>
    <property type="match status" value="1"/>
</dbReference>
<dbReference type="PROSITE" id="PS00831">
    <property type="entry name" value="RIBOSOMAL_L27"/>
    <property type="match status" value="1"/>
</dbReference>
<proteinExistence type="inferred from homology"/>
<gene>
    <name evidence="1" type="primary">rpmA</name>
    <name type="ordered locus">Vapar_4217</name>
</gene>
<evidence type="ECO:0000255" key="1">
    <source>
        <dbReference type="HAMAP-Rule" id="MF_00539"/>
    </source>
</evidence>
<evidence type="ECO:0000305" key="2"/>